<protein>
    <recommendedName>
        <fullName>Receptor-type tyrosine-protein phosphatase eta</fullName>
        <shortName>Protein-tyrosine phosphatase eta</shortName>
        <shortName>R-PTP-eta</shortName>
        <ecNumber>3.1.3.48</ecNumber>
    </recommendedName>
    <alternativeName>
        <fullName>HPTP beta-like tyrosine phosphatase</fullName>
    </alternativeName>
    <alternativeName>
        <fullName>Protein-tyrosine phosphatase receptor type J</fullName>
        <shortName>R-PTP-J</shortName>
    </alternativeName>
    <alternativeName>
        <fullName>Susceptibility to colon cancer 1</fullName>
    </alternativeName>
    <cdAntigenName>CD148</cdAntigenName>
</protein>
<sequence>MKPAARETRTPPRSPGLRWALLPLLLLLRQGQVLCAGAAPNPIFDIEAVVSPTSVLLTWKHNDSGASECRIENKMESNLTFPVKNQTSCNITGLSPGTSYTFSIISVTTNETLNKTITTEPWPVSDLHVTSVGVTQARLTWSNANGTASYRMLIEELTTHSSVNISGLKPGTNNSFAFPESNETQADFAVAEEVPDANGTKRIPVTNLSQLHKNSLVSVDPPSGQDPSLTEILLTDLKPDTQYNATIYSQAANGTEGQPRNKVFKTNSTQVSDVRAMNISASSMTLTWKSNYDGSRTSIVYKIHVAGGTHSVNQTVNKTEAIILGLSSSTLYNITVHPFLGQTEGTPGFLQVYTSPDQVSDFRVTNVSTRAIGLAWRSNDSKSFEIFIKQDGGEKHRNASTGNQSYMVEDLKPGTSYHFEIIPRGPDGTEGLSSTVNGSTDPSAVTDIRVVNISTTEMQLEWQNTDDASGYTYHLVLESKSGSIIRTNSSQKWITVGSLTPGTLYNVTIFPEVDQIQGISNSITQYTRPSSVSHIEVNTTTTTAAIRWKNEDAASASYAYSVLILKTGDGSNVTSNFTKDPSILIPELIPGVSYTVKILTQVGDGTTSLVPGWNLFCTEPEPVTSFHCEVVPKEPALVLKWACPFGMYTGFELGVRSDSWDNMTRLENCTSDDDTECRTEVAYLNFSTSYNISIATLSCGKMALPAQNICTTGITDPPTPDGSPNITSVSHNSVKVKFSGFEASHGPIKAYAVILTTGEAAQPSADVLKYTYEDFKRGASDTYVTYLIRIEEKGQSQGLSEVLNYEIDVGNQSTTLGYYNGRLEPLGSYRACVAGFTNITYNLQNDGLINGDESYVSFSPYSEAVFLPQDPGVICGAVFGCIFGALAITAVGGFIFWRKKRTDAKNNEVSFSQIKPKKSKLIRVENFEAYFKKQQADSNCGFAEEYEDLKLIGISLPKYTAEIAENRGKNRYNNVLPYDISRVKLSVQTHSTDDYINANYMPGYHSKKDFIATQGPLPNTLKDFWRMVWEKNVYAIVMLTKCVEQGRTKCEEYWPSKQAQDYGDITVAMTSEVVLPEWTIRDFVVKNMQNSESHPLRQFHFTSWPDHGVPDTTDLLINFRYLVRDYMKQIPPESPILVHCSAGVGRTGTFIAIDRLIYQIENENTVDVYGIVYDLRMHRPLMVQTEDQYVFLNQCVLDIIRAQKDSKVDLIYQNTTAMTIYENLEPVSMFGKTNGYIA</sequence>
<proteinExistence type="evidence at protein level"/>
<organism>
    <name type="scientific">Mus musculus</name>
    <name type="common">Mouse</name>
    <dbReference type="NCBI Taxonomy" id="10090"/>
    <lineage>
        <taxon>Eukaryota</taxon>
        <taxon>Metazoa</taxon>
        <taxon>Chordata</taxon>
        <taxon>Craniata</taxon>
        <taxon>Vertebrata</taxon>
        <taxon>Euteleostomi</taxon>
        <taxon>Mammalia</taxon>
        <taxon>Eutheria</taxon>
        <taxon>Euarchontoglires</taxon>
        <taxon>Glires</taxon>
        <taxon>Rodentia</taxon>
        <taxon>Myomorpha</taxon>
        <taxon>Muroidea</taxon>
        <taxon>Muridae</taxon>
        <taxon>Murinae</taxon>
        <taxon>Mus</taxon>
        <taxon>Mus</taxon>
    </lineage>
</organism>
<gene>
    <name type="primary">Ptprj</name>
    <name type="synonym">Byp</name>
    <name type="synonym">Scc1</name>
</gene>
<name>PTPRJ_MOUSE</name>
<dbReference type="EC" id="3.1.3.48"/>
<dbReference type="EMBL" id="D45212">
    <property type="protein sequence ID" value="BAA08146.1"/>
    <property type="molecule type" value="mRNA"/>
</dbReference>
<dbReference type="EMBL" id="AY038877">
    <property type="protein sequence ID" value="AAN11409.1"/>
    <property type="molecule type" value="Genomic_DNA"/>
</dbReference>
<dbReference type="EMBL" id="AY038861">
    <property type="protein sequence ID" value="AAN11409.1"/>
    <property type="status" value="JOINED"/>
    <property type="molecule type" value="Genomic_DNA"/>
</dbReference>
<dbReference type="EMBL" id="AY038891">
    <property type="protein sequence ID" value="AAK96030.1"/>
    <property type="molecule type" value="mRNA"/>
</dbReference>
<dbReference type="EMBL" id="AY039232">
    <property type="protein sequence ID" value="AAK98640.1"/>
    <property type="molecule type" value="mRNA"/>
</dbReference>
<dbReference type="EMBL" id="DQ133576">
    <property type="protein sequence ID" value="ABA07808.1"/>
    <property type="molecule type" value="mRNA"/>
</dbReference>
<dbReference type="EMBL" id="AK147318">
    <property type="protein sequence ID" value="BAE27842.1"/>
    <property type="molecule type" value="mRNA"/>
</dbReference>
<dbReference type="EMBL" id="AK147556">
    <property type="protein sequence ID" value="BAE27993.1"/>
    <property type="molecule type" value="mRNA"/>
</dbReference>
<dbReference type="CCDS" id="CCDS50630.1"/>
<dbReference type="PIR" id="S68700">
    <property type="entry name" value="S68700"/>
</dbReference>
<dbReference type="RefSeq" id="NP_033008.4">
    <property type="nucleotide sequence ID" value="NM_008982.6"/>
</dbReference>
<dbReference type="SMR" id="Q64455"/>
<dbReference type="BioGRID" id="202499">
    <property type="interactions" value="9"/>
</dbReference>
<dbReference type="FunCoup" id="Q64455">
    <property type="interactions" value="447"/>
</dbReference>
<dbReference type="IntAct" id="Q64455">
    <property type="interactions" value="1"/>
</dbReference>
<dbReference type="STRING" id="10090.ENSMUSP00000129592"/>
<dbReference type="GlyConnect" id="2668">
    <property type="glycosylation" value="5 N-Linked glycans (4 sites)"/>
</dbReference>
<dbReference type="GlyCosmos" id="Q64455">
    <property type="glycosylation" value="37 sites, 5 glycans"/>
</dbReference>
<dbReference type="GlyGen" id="Q64455">
    <property type="glycosylation" value="38 sites, 23 N-linked glycans (21 sites)"/>
</dbReference>
<dbReference type="iPTMnet" id="Q64455"/>
<dbReference type="PhosphoSitePlus" id="Q64455"/>
<dbReference type="PaxDb" id="10090-ENSMUSP00000107121"/>
<dbReference type="ProteomicsDB" id="302014"/>
<dbReference type="DNASU" id="19271"/>
<dbReference type="GeneID" id="19271"/>
<dbReference type="KEGG" id="mmu:19271"/>
<dbReference type="AGR" id="MGI:104574"/>
<dbReference type="CTD" id="5795"/>
<dbReference type="MGI" id="MGI:104574">
    <property type="gene designation" value="Ptprj"/>
</dbReference>
<dbReference type="eggNOG" id="KOG0791">
    <property type="taxonomic scope" value="Eukaryota"/>
</dbReference>
<dbReference type="InParanoid" id="Q64455"/>
<dbReference type="BRENDA" id="3.1.3.48">
    <property type="organism ID" value="3474"/>
</dbReference>
<dbReference type="Reactome" id="R-MMU-202427">
    <property type="pathway name" value="Phosphorylation of CD3 and TCR zeta chains"/>
</dbReference>
<dbReference type="Reactome" id="R-MMU-6798695">
    <property type="pathway name" value="Neutrophil degranulation"/>
</dbReference>
<dbReference type="Reactome" id="R-MMU-6807004">
    <property type="pathway name" value="Negative regulation of MET activity"/>
</dbReference>
<dbReference type="Reactome" id="R-MMU-9706369">
    <property type="pathway name" value="Negative regulation of FLT3"/>
</dbReference>
<dbReference type="BioGRID-ORCS" id="19271">
    <property type="hits" value="5 hits in 81 CRISPR screens"/>
</dbReference>
<dbReference type="ChiTaRS" id="Ptprj">
    <property type="organism name" value="mouse"/>
</dbReference>
<dbReference type="PRO" id="PR:Q64455"/>
<dbReference type="Proteomes" id="UP000000589">
    <property type="component" value="Chromosome 2"/>
</dbReference>
<dbReference type="RNAct" id="Q64455">
    <property type="molecule type" value="protein"/>
</dbReference>
<dbReference type="GO" id="GO:0009986">
    <property type="term" value="C:cell surface"/>
    <property type="evidence" value="ECO:0007669"/>
    <property type="project" value="Ensembl"/>
</dbReference>
<dbReference type="GO" id="GO:0005911">
    <property type="term" value="C:cell-cell junction"/>
    <property type="evidence" value="ECO:0000250"/>
    <property type="project" value="UniProtKB"/>
</dbReference>
<dbReference type="GO" id="GO:0001772">
    <property type="term" value="C:immunological synapse"/>
    <property type="evidence" value="ECO:0000314"/>
    <property type="project" value="UniProtKB"/>
</dbReference>
<dbReference type="GO" id="GO:0016604">
    <property type="term" value="C:nuclear body"/>
    <property type="evidence" value="ECO:0007669"/>
    <property type="project" value="Ensembl"/>
</dbReference>
<dbReference type="GO" id="GO:0005730">
    <property type="term" value="C:nucleolus"/>
    <property type="evidence" value="ECO:0007669"/>
    <property type="project" value="Ensembl"/>
</dbReference>
<dbReference type="GO" id="GO:0005886">
    <property type="term" value="C:plasma membrane"/>
    <property type="evidence" value="ECO:0000314"/>
    <property type="project" value="UniProtKB"/>
</dbReference>
<dbReference type="GO" id="GO:0032587">
    <property type="term" value="C:ruffle membrane"/>
    <property type="evidence" value="ECO:0000314"/>
    <property type="project" value="UniProtKB"/>
</dbReference>
<dbReference type="GO" id="GO:0008013">
    <property type="term" value="F:beta-catenin binding"/>
    <property type="evidence" value="ECO:0007669"/>
    <property type="project" value="Ensembl"/>
</dbReference>
<dbReference type="GO" id="GO:0045296">
    <property type="term" value="F:cadherin binding"/>
    <property type="evidence" value="ECO:0007669"/>
    <property type="project" value="Ensembl"/>
</dbReference>
<dbReference type="GO" id="GO:0070097">
    <property type="term" value="F:delta-catenin binding"/>
    <property type="evidence" value="ECO:0007669"/>
    <property type="project" value="Ensembl"/>
</dbReference>
<dbReference type="GO" id="GO:0045295">
    <property type="term" value="F:gamma-catenin binding"/>
    <property type="evidence" value="ECO:0007669"/>
    <property type="project" value="Ensembl"/>
</dbReference>
<dbReference type="GO" id="GO:0051019">
    <property type="term" value="F:mitogen-activated protein kinase binding"/>
    <property type="evidence" value="ECO:0007669"/>
    <property type="project" value="Ensembl"/>
</dbReference>
<dbReference type="GO" id="GO:0016791">
    <property type="term" value="F:phosphatase activity"/>
    <property type="evidence" value="ECO:0000250"/>
    <property type="project" value="UniProtKB"/>
</dbReference>
<dbReference type="GO" id="GO:0005161">
    <property type="term" value="F:platelet-derived growth factor receptor binding"/>
    <property type="evidence" value="ECO:0007669"/>
    <property type="project" value="Ensembl"/>
</dbReference>
<dbReference type="GO" id="GO:0004725">
    <property type="term" value="F:protein tyrosine phosphatase activity"/>
    <property type="evidence" value="ECO:0000315"/>
    <property type="project" value="UniProtKB"/>
</dbReference>
<dbReference type="GO" id="GO:0030183">
    <property type="term" value="P:B cell differentiation"/>
    <property type="evidence" value="ECO:0000315"/>
    <property type="project" value="ARUK-UCL"/>
</dbReference>
<dbReference type="GO" id="GO:0007596">
    <property type="term" value="P:blood coagulation"/>
    <property type="evidence" value="ECO:0000315"/>
    <property type="project" value="UniProtKB"/>
</dbReference>
<dbReference type="GO" id="GO:0042593">
    <property type="term" value="P:glucose homeostasis"/>
    <property type="evidence" value="ECO:0000315"/>
    <property type="project" value="CACAO"/>
</dbReference>
<dbReference type="GO" id="GO:0007507">
    <property type="term" value="P:heart development"/>
    <property type="evidence" value="ECO:0000315"/>
    <property type="project" value="MGI"/>
</dbReference>
<dbReference type="GO" id="GO:0030308">
    <property type="term" value="P:negative regulation of cell growth"/>
    <property type="evidence" value="ECO:0007669"/>
    <property type="project" value="Ensembl"/>
</dbReference>
<dbReference type="GO" id="GO:0030336">
    <property type="term" value="P:negative regulation of cell migration"/>
    <property type="evidence" value="ECO:0000314"/>
    <property type="project" value="UniProtKB"/>
</dbReference>
<dbReference type="GO" id="GO:0008285">
    <property type="term" value="P:negative regulation of cell population proliferation"/>
    <property type="evidence" value="ECO:0000315"/>
    <property type="project" value="UniProtKB"/>
</dbReference>
<dbReference type="GO" id="GO:0042059">
    <property type="term" value="P:negative regulation of epidermal growth factor receptor signaling pathway"/>
    <property type="evidence" value="ECO:0000250"/>
    <property type="project" value="UniProtKB"/>
</dbReference>
<dbReference type="GO" id="GO:0046627">
    <property type="term" value="P:negative regulation of insulin receptor signaling pathway"/>
    <property type="evidence" value="ECO:0000315"/>
    <property type="project" value="CACAO"/>
</dbReference>
<dbReference type="GO" id="GO:0043407">
    <property type="term" value="P:negative regulation of MAP kinase activity"/>
    <property type="evidence" value="ECO:0000314"/>
    <property type="project" value="UniProtKB"/>
</dbReference>
<dbReference type="GO" id="GO:0051898">
    <property type="term" value="P:negative regulation of phosphatidylinositol 3-kinase/protein kinase B signal transduction"/>
    <property type="evidence" value="ECO:0000250"/>
    <property type="project" value="UniProtKB"/>
</dbReference>
<dbReference type="GO" id="GO:0010642">
    <property type="term" value="P:negative regulation of platelet-derived growth factor receptor signaling pathway"/>
    <property type="evidence" value="ECO:0000314"/>
    <property type="project" value="UniProtKB"/>
</dbReference>
<dbReference type="GO" id="GO:2000272">
    <property type="term" value="P:negative regulation of signaling receptor activity"/>
    <property type="evidence" value="ECO:0000315"/>
    <property type="project" value="UniProtKB"/>
</dbReference>
<dbReference type="GO" id="GO:0050860">
    <property type="term" value="P:negative regulation of T cell receptor signaling pathway"/>
    <property type="evidence" value="ECO:0000314"/>
    <property type="project" value="UniProtKB"/>
</dbReference>
<dbReference type="GO" id="GO:0043116">
    <property type="term" value="P:negative regulation of vascular permeability"/>
    <property type="evidence" value="ECO:0007669"/>
    <property type="project" value="Ensembl"/>
</dbReference>
<dbReference type="GO" id="GO:0048709">
    <property type="term" value="P:oligodendrocyte differentiation"/>
    <property type="evidence" value="ECO:0000315"/>
    <property type="project" value="MGI"/>
</dbReference>
<dbReference type="GO" id="GO:1990264">
    <property type="term" value="P:peptidyl-tyrosine dephosphorylation involved in inactivation of protein kinase activity"/>
    <property type="evidence" value="ECO:0000315"/>
    <property type="project" value="CACAO"/>
</dbReference>
<dbReference type="GO" id="GO:0030220">
    <property type="term" value="P:platelet formation"/>
    <property type="evidence" value="ECO:0000250"/>
    <property type="project" value="UniProtKB"/>
</dbReference>
<dbReference type="GO" id="GO:0048008">
    <property type="term" value="P:platelet-derived growth factor receptor signaling pathway"/>
    <property type="evidence" value="ECO:0000250"/>
    <property type="project" value="UniProtKB"/>
</dbReference>
<dbReference type="GO" id="GO:0050918">
    <property type="term" value="P:positive chemotaxis"/>
    <property type="evidence" value="ECO:0007669"/>
    <property type="project" value="Ensembl"/>
</dbReference>
<dbReference type="GO" id="GO:0050850">
    <property type="term" value="P:positive regulation of calcium-mediated signaling"/>
    <property type="evidence" value="ECO:0000316"/>
    <property type="project" value="ARUK-UCL"/>
</dbReference>
<dbReference type="GO" id="GO:0001954">
    <property type="term" value="P:positive regulation of cell-matrix adhesion"/>
    <property type="evidence" value="ECO:0000314"/>
    <property type="project" value="UniProtKB"/>
</dbReference>
<dbReference type="GO" id="GO:0060369">
    <property type="term" value="P:positive regulation of Fc receptor mediated stimulatory signaling pathway"/>
    <property type="evidence" value="ECO:0000316"/>
    <property type="project" value="ARUK-UCL"/>
</dbReference>
<dbReference type="GO" id="GO:0051894">
    <property type="term" value="P:positive regulation of focal adhesion assembly"/>
    <property type="evidence" value="ECO:0000250"/>
    <property type="project" value="UniProtKB"/>
</dbReference>
<dbReference type="GO" id="GO:0010759">
    <property type="term" value="P:positive regulation of macrophage chemotaxis"/>
    <property type="evidence" value="ECO:0000314"/>
    <property type="project" value="UniProtKB"/>
</dbReference>
<dbReference type="GO" id="GO:0043410">
    <property type="term" value="P:positive regulation of MAPK cascade"/>
    <property type="evidence" value="ECO:0000316"/>
    <property type="project" value="ARUK-UCL"/>
</dbReference>
<dbReference type="GO" id="GO:0050766">
    <property type="term" value="P:positive regulation of phagocytosis"/>
    <property type="evidence" value="ECO:0000316"/>
    <property type="project" value="ARUK-UCL"/>
</dbReference>
<dbReference type="GO" id="GO:0051897">
    <property type="term" value="P:positive regulation of phosphatidylinositol 3-kinase/protein kinase B signal transduction"/>
    <property type="evidence" value="ECO:0007669"/>
    <property type="project" value="Ensembl"/>
</dbReference>
<dbReference type="GO" id="GO:0010572">
    <property type="term" value="P:positive regulation of platelet activation"/>
    <property type="evidence" value="ECO:0000315"/>
    <property type="project" value="UniProtKB"/>
</dbReference>
<dbReference type="GO" id="GO:0032760">
    <property type="term" value="P:positive regulation of tumor necrosis factor production"/>
    <property type="evidence" value="ECO:0000316"/>
    <property type="project" value="ARUK-UCL"/>
</dbReference>
<dbReference type="GO" id="GO:0001570">
    <property type="term" value="P:vasculogenesis"/>
    <property type="evidence" value="ECO:0000315"/>
    <property type="project" value="MGI"/>
</dbReference>
<dbReference type="CDD" id="cd00063">
    <property type="entry name" value="FN3"/>
    <property type="match status" value="5"/>
</dbReference>
<dbReference type="CDD" id="cd14615">
    <property type="entry name" value="R-PTPc-J"/>
    <property type="match status" value="1"/>
</dbReference>
<dbReference type="FunFam" id="3.90.190.10:FF:000009">
    <property type="entry name" value="Receptor-type tyrosine-protein phosphatase beta"/>
    <property type="match status" value="1"/>
</dbReference>
<dbReference type="FunFam" id="2.60.40.10:FF:000362">
    <property type="entry name" value="Receptor-type tyrosine-protein phosphatase eta"/>
    <property type="match status" value="4"/>
</dbReference>
<dbReference type="FunFam" id="2.60.40.10:FF:001417">
    <property type="entry name" value="Receptor-type tyrosine-protein phosphatase eta"/>
    <property type="match status" value="1"/>
</dbReference>
<dbReference type="Gene3D" id="2.60.40.10">
    <property type="entry name" value="Immunoglobulins"/>
    <property type="match status" value="6"/>
</dbReference>
<dbReference type="Gene3D" id="3.90.190.10">
    <property type="entry name" value="Protein tyrosine phosphatase superfamily"/>
    <property type="match status" value="1"/>
</dbReference>
<dbReference type="InterPro" id="IPR003961">
    <property type="entry name" value="FN3_dom"/>
</dbReference>
<dbReference type="InterPro" id="IPR036116">
    <property type="entry name" value="FN3_sf"/>
</dbReference>
<dbReference type="InterPro" id="IPR013783">
    <property type="entry name" value="Ig-like_fold"/>
</dbReference>
<dbReference type="InterPro" id="IPR029021">
    <property type="entry name" value="Prot-tyrosine_phosphatase-like"/>
</dbReference>
<dbReference type="InterPro" id="IPR000242">
    <property type="entry name" value="PTP_cat"/>
</dbReference>
<dbReference type="InterPro" id="IPR041201">
    <property type="entry name" value="PTPRJ_TM"/>
</dbReference>
<dbReference type="InterPro" id="IPR050713">
    <property type="entry name" value="RTP_Phos/Ushers"/>
</dbReference>
<dbReference type="InterPro" id="IPR016130">
    <property type="entry name" value="Tyr_Pase_AS"/>
</dbReference>
<dbReference type="InterPro" id="IPR003595">
    <property type="entry name" value="Tyr_Pase_cat"/>
</dbReference>
<dbReference type="InterPro" id="IPR000387">
    <property type="entry name" value="Tyr_Pase_dom"/>
</dbReference>
<dbReference type="PANTHER" id="PTHR46957">
    <property type="entry name" value="CYTOKINE RECEPTOR"/>
    <property type="match status" value="1"/>
</dbReference>
<dbReference type="PANTHER" id="PTHR46957:SF5">
    <property type="entry name" value="PROTEIN-TYROSINE-PHOSPHATASE"/>
    <property type="match status" value="1"/>
</dbReference>
<dbReference type="Pfam" id="PF00041">
    <property type="entry name" value="fn3"/>
    <property type="match status" value="3"/>
</dbReference>
<dbReference type="Pfam" id="PF18861">
    <property type="entry name" value="PTP_tm"/>
    <property type="match status" value="1"/>
</dbReference>
<dbReference type="Pfam" id="PF00102">
    <property type="entry name" value="Y_phosphatase"/>
    <property type="match status" value="1"/>
</dbReference>
<dbReference type="PRINTS" id="PR00700">
    <property type="entry name" value="PRTYPHPHTASE"/>
</dbReference>
<dbReference type="SMART" id="SM00060">
    <property type="entry name" value="FN3"/>
    <property type="match status" value="8"/>
</dbReference>
<dbReference type="SMART" id="SM00194">
    <property type="entry name" value="PTPc"/>
    <property type="match status" value="1"/>
</dbReference>
<dbReference type="SMART" id="SM00404">
    <property type="entry name" value="PTPc_motif"/>
    <property type="match status" value="1"/>
</dbReference>
<dbReference type="SUPFAM" id="SSF52799">
    <property type="entry name" value="(Phosphotyrosine protein) phosphatases II"/>
    <property type="match status" value="1"/>
</dbReference>
<dbReference type="SUPFAM" id="SSF49265">
    <property type="entry name" value="Fibronectin type III"/>
    <property type="match status" value="4"/>
</dbReference>
<dbReference type="PROSITE" id="PS50853">
    <property type="entry name" value="FN3"/>
    <property type="match status" value="6"/>
</dbReference>
<dbReference type="PROSITE" id="PS00383">
    <property type="entry name" value="TYR_PHOSPHATASE_1"/>
    <property type="match status" value="1"/>
</dbReference>
<dbReference type="PROSITE" id="PS50056">
    <property type="entry name" value="TYR_PHOSPHATASE_2"/>
    <property type="match status" value="1"/>
</dbReference>
<dbReference type="PROSITE" id="PS50055">
    <property type="entry name" value="TYR_PHOSPHATASE_PTP"/>
    <property type="match status" value="1"/>
</dbReference>
<comment type="function">
    <text evidence="2 7 8 9 10 11 12 13">Tyrosine phosphatase which dephosphorylates or contributes to the dephosphorylation of CTNND1, FLT3, PDGFRB, MET, KDR, LYN, SRC, MAPK1, MAPK3, EGFR, TJP1, OCLN, PIK3R1 and PIK3R2 (By similarity). Plays a role in cell adhesion, migration, proliferation and differentiation (PubMed:18249142). Has a role in megakaryocytes and platelet formation. Involved in vascular development (PubMed:12588999). May be involved in the mechanism of contact inhibition of cell growth (PubMed:12771128). Regulator of macrophage adhesion and spreading (PubMed:19268662). Positively affects cell-matrix adhesion (PubMed:12833140). Positive regulator of platelet activation and thrombosis (PubMed:19246339). Negative regulator of cell proliferation (By similarity). Negative regulator of PDGF-stimulated cell migration; through dephosphorylation of PDGFR (PubMed:12833140). Positive regulator of endothelial cell survival, as well as of VEGF-induced SRC and AKT activation; through KDR dephosphorylation (By similarity). Negative regulator of EGFR signaling pathway; through EGFR dephosphorylation (By similarity). Enhances the barrier function of epithelial junctions during reassembly (By similarity). Negatively regulates T-cell receptor (TCR) signaling (By similarity). Upon T-cell TCR activation, it is up-regulated and excluded from the immunological synapses, while upon T-cell-antigen presenting cells (APC) disengagement, it is no longer excluded and can dephosphorylate PLCG1 and LAT to down-regulate prolongation of signaling (PubMed:12913111).</text>
</comment>
<comment type="catalytic activity">
    <reaction evidence="6">
        <text>O-phospho-L-tyrosyl-[protein] + H2O = L-tyrosyl-[protein] + phosphate</text>
        <dbReference type="Rhea" id="RHEA:10684"/>
        <dbReference type="Rhea" id="RHEA-COMP:10136"/>
        <dbReference type="Rhea" id="RHEA-COMP:20101"/>
        <dbReference type="ChEBI" id="CHEBI:15377"/>
        <dbReference type="ChEBI" id="CHEBI:43474"/>
        <dbReference type="ChEBI" id="CHEBI:46858"/>
        <dbReference type="ChEBI" id="CHEBI:61978"/>
        <dbReference type="EC" id="3.1.3.48"/>
    </reaction>
</comment>
<comment type="subunit">
    <text evidence="1">Monomer. Interacts with CTNNB1 (phosphorylated) and JUP (phosphorylated). Interacts with FLT3 (phosphorylated). Interacts with GAB1 and GRB2 (By similarity).</text>
</comment>
<comment type="subcellular location">
    <subcellularLocation>
        <location>Cell membrane</location>
        <topology>Single-pass type I membrane protein</topology>
    </subcellularLocation>
    <subcellularLocation>
        <location>Cell projection</location>
        <location>Ruffle membrane</location>
    </subcellularLocation>
    <subcellularLocation>
        <location>Cell junction</location>
    </subcellularLocation>
    <text>After T-cell stimulation, it is temporarily excluded from immunological synapses. Found at cell borders.</text>
</comment>
<comment type="tissue specificity">
    <text evidence="15 16 17">Expressed at high levels in brain, kidney, spleen and intestine, and at lower levels in liver, lung, thymus and heart. Expressed at a high level in the myeloid cell line FDC-P2, and at a lower level in the pre-B lymphoid cell line WEHI-231 and the T hybridoma cell line HB21.7.31. Not expressed in the fibroblast cell line NIH3T3 or the erythroid cell line F5-5. Expressed in macrophages.</text>
</comment>
<comment type="developmental stage">
    <text evidence="17">Expressed at 11.5 dpc in presumptive macrophages concentrated in the liver and scattered throughout the embryonic mesenchyme. Expressed at 11.5 and 12.5 dpc in the developing eye and in the ganglia and processes of cranial and spinal nerves constituting the PNS.</text>
</comment>
<comment type="similarity">
    <text evidence="18">Belongs to the protein-tyrosine phosphatase family. Receptor class 3 subfamily.</text>
</comment>
<accession>Q64455</accession>
<accession>Q3UH64</accession>
<accession>Q3UHL5</accession>
<accession>Q541R5</accession>
<accession>Q8CIW9</accession>
<accession>Q8K3Q2</accession>
<feature type="signal peptide" evidence="3">
    <location>
        <begin position="1"/>
        <end position="28"/>
    </location>
</feature>
<feature type="chain" id="PRO_0000025445" description="Receptor-type tyrosine-protein phosphatase eta">
    <location>
        <begin position="29"/>
        <end position="1238"/>
    </location>
</feature>
<feature type="topological domain" description="Extracellular" evidence="3">
    <location>
        <begin position="29"/>
        <end position="876"/>
    </location>
</feature>
<feature type="transmembrane region" description="Helical" evidence="3">
    <location>
        <begin position="877"/>
        <end position="897"/>
    </location>
</feature>
<feature type="topological domain" description="Cytoplasmic" evidence="3">
    <location>
        <begin position="898"/>
        <end position="1238"/>
    </location>
</feature>
<feature type="domain" description="Fibronectin type-III 1" evidence="5">
    <location>
        <begin position="39"/>
        <end position="122"/>
    </location>
</feature>
<feature type="domain" description="Fibronectin type-III 2" evidence="5">
    <location>
        <begin position="170"/>
        <end position="266"/>
    </location>
</feature>
<feature type="domain" description="Fibronectin type-III 3" evidence="5">
    <location>
        <begin position="270"/>
        <end position="358"/>
    </location>
</feature>
<feature type="domain" description="Fibronectin type-III 4" evidence="5">
    <location>
        <begin position="359"/>
        <end position="443"/>
    </location>
</feature>
<feature type="domain" description="Fibronectin type-III 5" evidence="5">
    <location>
        <begin position="444"/>
        <end position="527"/>
    </location>
</feature>
<feature type="domain" description="Fibronectin type-III 6" evidence="5">
    <location>
        <begin position="528"/>
        <end position="621"/>
    </location>
</feature>
<feature type="domain" description="Fibronectin type-III 7" evidence="5">
    <location>
        <begin position="622"/>
        <end position="718"/>
    </location>
</feature>
<feature type="domain" description="Fibronectin type-III 8" evidence="5">
    <location>
        <begin position="717"/>
        <end position="803"/>
    </location>
</feature>
<feature type="domain" description="Tyrosine-protein phosphatase" evidence="4">
    <location>
        <begin position="942"/>
        <end position="1199"/>
    </location>
</feature>
<feature type="active site" description="Phosphocysteine intermediate" evidence="4 6">
    <location>
        <position position="1140"/>
    </location>
</feature>
<feature type="binding site" evidence="1">
    <location>
        <position position="1106"/>
    </location>
    <ligand>
        <name>substrate</name>
    </ligand>
</feature>
<feature type="binding site" evidence="1">
    <location>
        <begin position="1140"/>
        <end position="1146"/>
    </location>
    <ligand>
        <name>substrate</name>
    </ligand>
</feature>
<feature type="binding site" evidence="1">
    <location>
        <position position="1184"/>
    </location>
    <ligand>
        <name>substrate</name>
    </ligand>
</feature>
<feature type="modified residue" description="Phosphoserine" evidence="2">
    <location>
        <position position="910"/>
    </location>
</feature>
<feature type="glycosylation site" description="N-linked (GlcNAc...) asparagine" evidence="3">
    <location>
        <position position="62"/>
    </location>
</feature>
<feature type="glycosylation site" description="N-linked (GlcNAc...) asparagine" evidence="3">
    <location>
        <position position="78"/>
    </location>
</feature>
<feature type="glycosylation site" description="N-linked (GlcNAc...) asparagine" evidence="3">
    <location>
        <position position="85"/>
    </location>
</feature>
<feature type="glycosylation site" description="N-linked (GlcNAc...) asparagine" evidence="3">
    <location>
        <position position="90"/>
    </location>
</feature>
<feature type="glycosylation site" description="N-linked (GlcNAc...) asparagine" evidence="3">
    <location>
        <position position="110"/>
    </location>
</feature>
<feature type="glycosylation site" description="N-linked (GlcNAc...) asparagine" evidence="3">
    <location>
        <position position="114"/>
    </location>
</feature>
<feature type="glycosylation site" description="N-linked (GlcNAc...) asparagine" evidence="14">
    <location>
        <position position="145"/>
    </location>
</feature>
<feature type="glycosylation site" description="N-linked (GlcNAc...) asparagine" evidence="3">
    <location>
        <position position="164"/>
    </location>
</feature>
<feature type="glycosylation site" description="N-linked (GlcNAc...) asparagine" evidence="3">
    <location>
        <position position="173"/>
    </location>
</feature>
<feature type="glycosylation site" description="N-linked (GlcNAc...) asparagine" evidence="3">
    <location>
        <position position="182"/>
    </location>
</feature>
<feature type="glycosylation site" description="N-linked (GlcNAc...) asparagine" evidence="3">
    <location>
        <position position="198"/>
    </location>
</feature>
<feature type="glycosylation site" description="N-linked (GlcNAc...) asparagine" evidence="3">
    <location>
        <position position="207"/>
    </location>
</feature>
<feature type="glycosylation site" description="N-linked (GlcNAc...) asparagine" evidence="3">
    <location>
        <position position="244"/>
    </location>
</feature>
<feature type="glycosylation site" description="N-linked (GlcNAc...) asparagine" evidence="3">
    <location>
        <position position="253"/>
    </location>
</feature>
<feature type="glycosylation site" description="N-linked (GlcNAc...) asparagine" evidence="3">
    <location>
        <position position="267"/>
    </location>
</feature>
<feature type="glycosylation site" description="N-linked (GlcNAc...) asparagine" evidence="3">
    <location>
        <position position="278"/>
    </location>
</feature>
<feature type="glycosylation site" description="N-linked (GlcNAc...) asparagine" evidence="14">
    <location>
        <position position="313"/>
    </location>
</feature>
<feature type="glycosylation site" description="N-linked (GlcNAc...) asparagine" evidence="14">
    <location>
        <position position="317"/>
    </location>
</feature>
<feature type="glycosylation site" description="N-linked (GlcNAc...) asparagine" evidence="3">
    <location>
        <position position="333"/>
    </location>
</feature>
<feature type="glycosylation site" description="N-linked (GlcNAc...) asparagine" evidence="3">
    <location>
        <position position="366"/>
    </location>
</feature>
<feature type="glycosylation site" description="N-linked (GlcNAc...) asparagine" evidence="3">
    <location>
        <position position="379"/>
    </location>
</feature>
<feature type="glycosylation site" description="N-linked (GlcNAc...) asparagine" evidence="3">
    <location>
        <position position="398"/>
    </location>
</feature>
<feature type="glycosylation site" description="N-linked (GlcNAc...) asparagine" evidence="3">
    <location>
        <position position="403"/>
    </location>
</feature>
<feature type="glycosylation site" description="N-linked (GlcNAc...) asparagine" evidence="3">
    <location>
        <position position="437"/>
    </location>
</feature>
<feature type="glycosylation site" description="N-linked (GlcNAc...) asparagine" evidence="3">
    <location>
        <position position="452"/>
    </location>
</feature>
<feature type="glycosylation site" description="N-linked (GlcNAc...) asparagine" evidence="3">
    <location>
        <position position="488"/>
    </location>
</feature>
<feature type="glycosylation site" description="N-linked (GlcNAc...) asparagine" evidence="3">
    <location>
        <position position="506"/>
    </location>
</feature>
<feature type="glycosylation site" description="N-linked (GlcNAc...) asparagine" evidence="14">
    <location>
        <position position="538"/>
    </location>
</feature>
<feature type="glycosylation site" description="N-linked (GlcNAc...) asparagine" evidence="3">
    <location>
        <position position="572"/>
    </location>
</feature>
<feature type="glycosylation site" description="N-linked (GlcNAc...) asparagine" evidence="3">
    <location>
        <position position="576"/>
    </location>
</feature>
<feature type="glycosylation site" description="N-linked (GlcNAc...) asparagine" evidence="3">
    <location>
        <position position="662"/>
    </location>
</feature>
<feature type="glycosylation site" description="N-linked (GlcNAc...) asparagine" evidence="3">
    <location>
        <position position="668"/>
    </location>
</feature>
<feature type="glycosylation site" description="N-linked (GlcNAc...) asparagine" evidence="3">
    <location>
        <position position="685"/>
    </location>
</feature>
<feature type="glycosylation site" description="N-linked (GlcNAc...) asparagine" evidence="3">
    <location>
        <position position="691"/>
    </location>
</feature>
<feature type="glycosylation site" description="N-linked (GlcNAc...) asparagine" evidence="3">
    <location>
        <position position="725"/>
    </location>
</feature>
<feature type="glycosylation site" description="N-linked (GlcNAc...) asparagine" evidence="3">
    <location>
        <position position="811"/>
    </location>
</feature>
<feature type="glycosylation site" description="N-linked (GlcNAc...) asparagine" evidence="3">
    <location>
        <position position="838"/>
    </location>
</feature>
<feature type="mutagenesis site" description="Substrate trapping with much higher affinity for substrate." evidence="8">
    <original>D</original>
    <variation>A</variation>
    <location>
        <position position="1106"/>
    </location>
</feature>
<feature type="mutagenesis site" description="Catalytically inactive and substrate trapping with higher affinity for substrate." evidence="8 9">
    <original>C</original>
    <variation>S</variation>
    <location>
        <position position="1140"/>
    </location>
</feature>
<feature type="sequence conflict" description="In Ref. 1; BAA08146 and 2; AAK96030/AAK98640." evidence="18" ref="1 2">
    <original>S</original>
    <variation>T</variation>
    <location>
        <position position="175"/>
    </location>
</feature>
<feature type="sequence conflict" description="In Ref. 2; AAK98640." evidence="18" ref="2">
    <original>L</original>
    <variation>P</variation>
    <location>
        <position position="211"/>
    </location>
</feature>
<feature type="sequence conflict" description="In Ref. 2; AAK98640." evidence="18" ref="2">
    <original>V</original>
    <variation>A</variation>
    <location>
        <position position="217"/>
    </location>
</feature>
<feature type="sequence conflict" description="In Ref. 4; BAE27842." evidence="18" ref="4">
    <original>Q</original>
    <variation>H</variation>
    <location>
        <position position="463"/>
    </location>
</feature>
<feature type="sequence conflict" description="In Ref. 2; AAK98640." evidence="18" ref="2">
    <original>A</original>
    <variation>T</variation>
    <location>
        <position position="553"/>
    </location>
</feature>
<feature type="sequence conflict" description="In Ref. 2; AAK98640." evidence="18" ref="2">
    <original>P</original>
    <variation>S</variation>
    <location>
        <position position="622"/>
    </location>
</feature>
<feature type="sequence conflict" description="In Ref. 2; AAK98640." evidence="18" ref="2">
    <original>D</original>
    <variation>E</variation>
    <location>
        <position position="1061"/>
    </location>
</feature>
<feature type="sequence conflict" description="In Ref. 2; AAN11409." evidence="18" ref="2">
    <original>Y</original>
    <variation>D</variation>
    <location>
        <position position="1126"/>
    </location>
</feature>
<feature type="sequence conflict" description="In Ref. 2; AAN11409." evidence="18" ref="2">
    <original>E</original>
    <variation>K</variation>
    <location>
        <position position="1133"/>
    </location>
</feature>
<keyword id="KW-0965">Cell junction</keyword>
<keyword id="KW-1003">Cell membrane</keyword>
<keyword id="KW-0966">Cell projection</keyword>
<keyword id="KW-0325">Glycoprotein</keyword>
<keyword id="KW-0378">Hydrolase</keyword>
<keyword id="KW-0472">Membrane</keyword>
<keyword id="KW-0597">Phosphoprotein</keyword>
<keyword id="KW-0904">Protein phosphatase</keyword>
<keyword id="KW-1185">Reference proteome</keyword>
<keyword id="KW-0677">Repeat</keyword>
<keyword id="KW-0732">Signal</keyword>
<keyword id="KW-0812">Transmembrane</keyword>
<keyword id="KW-1133">Transmembrane helix</keyword>
<reference key="1">
    <citation type="journal article" date="1996" name="FEBS Lett.">
        <title>Molecular cloning and characterization of Byp, a murine receptor-type tyrosine phosphatase similar to human DEP-1.</title>
        <authorList>
            <person name="Kuramochi S."/>
            <person name="Matsuda S."/>
            <person name="Matsuda Y."/>
            <person name="Saitoh T."/>
            <person name="Ohsugi M."/>
            <person name="Yamamoto T."/>
        </authorList>
    </citation>
    <scope>NUCLEOTIDE SEQUENCE [MRNA]</scope>
    <scope>TISSUE SPECIFICITY</scope>
    <source>
        <strain>MRL-LPR/LPR</strain>
        <tissue>Lymph node</tissue>
    </source>
</reference>
<reference key="2">
    <citation type="journal article" date="2002" name="Nat. Genet.">
        <title>Ptprj is a candidate for the mouse colon-cancer susceptibility locus Scc1 and is frequently deleted in human cancers.</title>
        <authorList>
            <person name="Ruivenkamp C.A.L."/>
            <person name="van Wezel T."/>
            <person name="Zanon C."/>
            <person name="Stassen A.P.M."/>
            <person name="Vlcek C."/>
            <person name="Csikos T."/>
            <person name="Klous A.M."/>
            <person name="Tripodis N."/>
            <person name="Perrakis A."/>
            <person name="Boerrigter L."/>
            <person name="Groot P.C."/>
            <person name="Lindeman J."/>
            <person name="Mooi W.J."/>
            <person name="Meijjer G.A."/>
            <person name="Scholten G."/>
            <person name="Dauwerse H."/>
            <person name="Paces V."/>
            <person name="van Zandwijk N."/>
            <person name="van Ommen G.J.B."/>
            <person name="Demant P."/>
        </authorList>
    </citation>
    <scope>NUCLEOTIDE SEQUENCE [GENOMIC DNA / MRNA]</scope>
    <source>
        <strain>129/SvSl</strain>
        <strain>BALB/cJ</strain>
    </source>
</reference>
<reference key="3">
    <citation type="submission" date="2005-07" db="EMBL/GenBank/DDBJ databases">
        <title>Phenotypic consequences of the germ-line loss of the putative tumor suppressor Ptprj (Scc1).</title>
        <authorList>
            <person name="Csikos T."/>
            <person name="Snoek M."/>
            <person name="de Boer T."/>
            <person name="Drenth T."/>
            <person name="Krimpenfort P."/>
            <person name="van Amerongen R."/>
            <person name="Zevenhoven J."/>
            <person name="van der Valk M."/>
            <person name="Hellberg C."/>
            <person name="Ostman A."/>
            <person name="Demant P."/>
            <person name="Berns A."/>
        </authorList>
    </citation>
    <scope>NUCLEOTIDE SEQUENCE [MRNA]</scope>
    <source>
        <strain>129P2</strain>
    </source>
</reference>
<reference key="4">
    <citation type="journal article" date="2005" name="Science">
        <title>The transcriptional landscape of the mammalian genome.</title>
        <authorList>
            <person name="Carninci P."/>
            <person name="Kasukawa T."/>
            <person name="Katayama S."/>
            <person name="Gough J."/>
            <person name="Frith M.C."/>
            <person name="Maeda N."/>
            <person name="Oyama R."/>
            <person name="Ravasi T."/>
            <person name="Lenhard B."/>
            <person name="Wells C."/>
            <person name="Kodzius R."/>
            <person name="Shimokawa K."/>
            <person name="Bajic V.B."/>
            <person name="Brenner S.E."/>
            <person name="Batalov S."/>
            <person name="Forrest A.R."/>
            <person name="Zavolan M."/>
            <person name="Davis M.J."/>
            <person name="Wilming L.G."/>
            <person name="Aidinis V."/>
            <person name="Allen J.E."/>
            <person name="Ambesi-Impiombato A."/>
            <person name="Apweiler R."/>
            <person name="Aturaliya R.N."/>
            <person name="Bailey T.L."/>
            <person name="Bansal M."/>
            <person name="Baxter L."/>
            <person name="Beisel K.W."/>
            <person name="Bersano T."/>
            <person name="Bono H."/>
            <person name="Chalk A.M."/>
            <person name="Chiu K.P."/>
            <person name="Choudhary V."/>
            <person name="Christoffels A."/>
            <person name="Clutterbuck D.R."/>
            <person name="Crowe M.L."/>
            <person name="Dalla E."/>
            <person name="Dalrymple B.P."/>
            <person name="de Bono B."/>
            <person name="Della Gatta G."/>
            <person name="di Bernardo D."/>
            <person name="Down T."/>
            <person name="Engstrom P."/>
            <person name="Fagiolini M."/>
            <person name="Faulkner G."/>
            <person name="Fletcher C.F."/>
            <person name="Fukushima T."/>
            <person name="Furuno M."/>
            <person name="Futaki S."/>
            <person name="Gariboldi M."/>
            <person name="Georgii-Hemming P."/>
            <person name="Gingeras T.R."/>
            <person name="Gojobori T."/>
            <person name="Green R.E."/>
            <person name="Gustincich S."/>
            <person name="Harbers M."/>
            <person name="Hayashi Y."/>
            <person name="Hensch T.K."/>
            <person name="Hirokawa N."/>
            <person name="Hill D."/>
            <person name="Huminiecki L."/>
            <person name="Iacono M."/>
            <person name="Ikeo K."/>
            <person name="Iwama A."/>
            <person name="Ishikawa T."/>
            <person name="Jakt M."/>
            <person name="Kanapin A."/>
            <person name="Katoh M."/>
            <person name="Kawasawa Y."/>
            <person name="Kelso J."/>
            <person name="Kitamura H."/>
            <person name="Kitano H."/>
            <person name="Kollias G."/>
            <person name="Krishnan S.P."/>
            <person name="Kruger A."/>
            <person name="Kummerfeld S.K."/>
            <person name="Kurochkin I.V."/>
            <person name="Lareau L.F."/>
            <person name="Lazarevic D."/>
            <person name="Lipovich L."/>
            <person name="Liu J."/>
            <person name="Liuni S."/>
            <person name="McWilliam S."/>
            <person name="Madan Babu M."/>
            <person name="Madera M."/>
            <person name="Marchionni L."/>
            <person name="Matsuda H."/>
            <person name="Matsuzawa S."/>
            <person name="Miki H."/>
            <person name="Mignone F."/>
            <person name="Miyake S."/>
            <person name="Morris K."/>
            <person name="Mottagui-Tabar S."/>
            <person name="Mulder N."/>
            <person name="Nakano N."/>
            <person name="Nakauchi H."/>
            <person name="Ng P."/>
            <person name="Nilsson R."/>
            <person name="Nishiguchi S."/>
            <person name="Nishikawa S."/>
            <person name="Nori F."/>
            <person name="Ohara O."/>
            <person name="Okazaki Y."/>
            <person name="Orlando V."/>
            <person name="Pang K.C."/>
            <person name="Pavan W.J."/>
            <person name="Pavesi G."/>
            <person name="Pesole G."/>
            <person name="Petrovsky N."/>
            <person name="Piazza S."/>
            <person name="Reed J."/>
            <person name="Reid J.F."/>
            <person name="Ring B.Z."/>
            <person name="Ringwald M."/>
            <person name="Rost B."/>
            <person name="Ruan Y."/>
            <person name="Salzberg S.L."/>
            <person name="Sandelin A."/>
            <person name="Schneider C."/>
            <person name="Schoenbach C."/>
            <person name="Sekiguchi K."/>
            <person name="Semple C.A."/>
            <person name="Seno S."/>
            <person name="Sessa L."/>
            <person name="Sheng Y."/>
            <person name="Shibata Y."/>
            <person name="Shimada H."/>
            <person name="Shimada K."/>
            <person name="Silva D."/>
            <person name="Sinclair B."/>
            <person name="Sperling S."/>
            <person name="Stupka E."/>
            <person name="Sugiura K."/>
            <person name="Sultana R."/>
            <person name="Takenaka Y."/>
            <person name="Taki K."/>
            <person name="Tammoja K."/>
            <person name="Tan S.L."/>
            <person name="Tang S."/>
            <person name="Taylor M.S."/>
            <person name="Tegner J."/>
            <person name="Teichmann S.A."/>
            <person name="Ueda H.R."/>
            <person name="van Nimwegen E."/>
            <person name="Verardo R."/>
            <person name="Wei C.L."/>
            <person name="Yagi K."/>
            <person name="Yamanishi H."/>
            <person name="Zabarovsky E."/>
            <person name="Zhu S."/>
            <person name="Zimmer A."/>
            <person name="Hide W."/>
            <person name="Bult C."/>
            <person name="Grimmond S.M."/>
            <person name="Teasdale R.D."/>
            <person name="Liu E.T."/>
            <person name="Brusic V."/>
            <person name="Quackenbush J."/>
            <person name="Wahlestedt C."/>
            <person name="Mattick J.S."/>
            <person name="Hume D.A."/>
            <person name="Kai C."/>
            <person name="Sasaki D."/>
            <person name="Tomaru Y."/>
            <person name="Fukuda S."/>
            <person name="Kanamori-Katayama M."/>
            <person name="Suzuki M."/>
            <person name="Aoki J."/>
            <person name="Arakawa T."/>
            <person name="Iida J."/>
            <person name="Imamura K."/>
            <person name="Itoh M."/>
            <person name="Kato T."/>
            <person name="Kawaji H."/>
            <person name="Kawagashira N."/>
            <person name="Kawashima T."/>
            <person name="Kojima M."/>
            <person name="Kondo S."/>
            <person name="Konno H."/>
            <person name="Nakano K."/>
            <person name="Ninomiya N."/>
            <person name="Nishio T."/>
            <person name="Okada M."/>
            <person name="Plessy C."/>
            <person name="Shibata K."/>
            <person name="Shiraki T."/>
            <person name="Suzuki S."/>
            <person name="Tagami M."/>
            <person name="Waki K."/>
            <person name="Watahiki A."/>
            <person name="Okamura-Oho Y."/>
            <person name="Suzuki H."/>
            <person name="Kawai J."/>
            <person name="Hayashizaki Y."/>
        </authorList>
    </citation>
    <scope>NUCLEOTIDE SEQUENCE [LARGE SCALE MRNA]</scope>
    <source>
        <strain>C57BL/6J</strain>
        <tissue>Brain</tissue>
    </source>
</reference>
<reference key="5">
    <citation type="journal article" date="1993" name="Leukemia">
        <title>Identification of novel protein-tyrosine phosphatases in a human leukemia cell line, F-36P.</title>
        <authorList>
            <person name="Honda H."/>
            <person name="Shibuya M."/>
            <person name="Chiba S."/>
            <person name="Yazaki Y."/>
            <person name="Hirai H."/>
        </authorList>
    </citation>
    <scope>TISSUE SPECIFICITY</scope>
</reference>
<reference key="6">
    <citation type="journal article" date="1998" name="J. Leukoc. Biol.">
        <title>Murine DEP-1, a receptor protein tyrosine phosphatase, is expressed in macrophages and is regulated by CSF-1 and LPS.</title>
        <authorList>
            <person name="Osborne J.M."/>
            <person name="den Elzen N."/>
            <person name="Lichanska A.M."/>
            <person name="Costelloe E.O."/>
            <person name="Yamada T."/>
            <person name="Cassady A.I."/>
            <person name="Hume D.A."/>
        </authorList>
    </citation>
    <scope>TISSUE SPECIFICITY</scope>
    <scope>DEVELOPMENTAL STAGE</scope>
</reference>
<reference key="7">
    <citation type="journal article" date="2003" name="J. Cell Biol.">
        <title>Contact inhibition of VEGF-induced proliferation requires vascular endothelial cadherin, beta-catenin, and the phosphatase DEP-1/CD148.</title>
        <authorList>
            <person name="Grazia Lampugnani M."/>
            <person name="Zanetti A."/>
            <person name="Corada M."/>
            <person name="Takahashi T."/>
            <person name="Balconi G."/>
            <person name="Breviario F."/>
            <person name="Orsenigo F."/>
            <person name="Cattelino A."/>
            <person name="Kemler R."/>
            <person name="Daniel T.O."/>
            <person name="Dejana E."/>
        </authorList>
    </citation>
    <scope>FUNCTION</scope>
    <scope>MUTAGENESIS OF ASP-1106 AND CYS-1140</scope>
</reference>
<reference key="8">
    <citation type="journal article" date="2003" name="J. Cell Biol.">
        <title>The tyrosine phosphatase CD148 is excluded from the immunologic synapse and down-regulates prolonged T cell signaling.</title>
        <authorList>
            <person name="Lin J."/>
            <person name="Weiss A."/>
        </authorList>
    </citation>
    <scope>FUNCTION</scope>
    <scope>SUBCELLULAR LOCATION</scope>
</reference>
<reference key="9">
    <citation type="journal article" date="2003" name="Mol. Cell. Biol.">
        <title>A mutant receptor tyrosine phosphatase, CD148, causes defects in vascular development.</title>
        <authorList>
            <person name="Takahashi T."/>
            <person name="Takahashi K."/>
            <person name="St John P.L."/>
            <person name="Fleming P.A."/>
            <person name="Tomemori T."/>
            <person name="Watanabe T."/>
            <person name="Abrahamson D.R."/>
            <person name="Drake C.J."/>
            <person name="Shirasawa T."/>
            <person name="Daniel T.O."/>
        </authorList>
    </citation>
    <scope>FUNCTION</scope>
</reference>
<reference key="10">
    <citation type="journal article" date="2003" name="Oncogene">
        <title>The protein-tyrosine phosphatase DEP-1 modulates growth factor-stimulated cell migration and cell-matrix adhesion.</title>
        <authorList>
            <person name="Jandt E."/>
            <person name="Denner K."/>
            <person name="Kovalenko M."/>
            <person name="Ostman A."/>
            <person name="Bohmer F.D."/>
        </authorList>
    </citation>
    <scope>FUNCTION</scope>
    <scope>MUTAGENESIS OF CYS-1140</scope>
</reference>
<reference key="11">
    <citation type="journal article" date="2008" name="Immunity">
        <title>Structurally distinct phosphatases CD45 and CD148 both regulate B cell and macrophage immunoreceptor signaling.</title>
        <authorList>
            <person name="Zhu J.W."/>
            <person name="Brdicka T."/>
            <person name="Katsumoto T.R."/>
            <person name="Lin J."/>
            <person name="Weiss A."/>
        </authorList>
    </citation>
    <scope>FUNCTION</scope>
</reference>
<reference key="12">
    <citation type="journal article" date="2009" name="Blood">
        <title>The tyrosine phosphatase CD148 is an essential positive regulator of platelet activation and thrombosis.</title>
        <authorList>
            <person name="Senis Y.A."/>
            <person name="Tomlinson M.G."/>
            <person name="Ellison S."/>
            <person name="Mazharian A."/>
            <person name="Lim J."/>
            <person name="Zhao Y."/>
            <person name="Kornerup K.N."/>
            <person name="Auger J.M."/>
            <person name="Thomas S.G."/>
            <person name="Dhanjal T."/>
            <person name="Kalia N."/>
            <person name="Zhu J.W."/>
            <person name="Weiss A."/>
            <person name="Watson S.P."/>
        </authorList>
    </citation>
    <scope>FUNCTION</scope>
</reference>
<reference key="13">
    <citation type="journal article" date="2009" name="Exp. Cell Res.">
        <title>CD148/DEP-1 association with areas of cytoskeletal organisation in macrophages.</title>
        <authorList>
            <person name="Dave R.K."/>
            <person name="Hume D.A."/>
            <person name="Elsegood C."/>
            <person name="Kellie S."/>
        </authorList>
    </citation>
    <scope>FUNCTION</scope>
    <scope>SUBCELLULAR LOCATION</scope>
</reference>
<reference key="14">
    <citation type="journal article" date="2009" name="Nat. Biotechnol.">
        <title>Mass-spectrometric identification and relative quantification of N-linked cell surface glycoproteins.</title>
        <authorList>
            <person name="Wollscheid B."/>
            <person name="Bausch-Fluck D."/>
            <person name="Henderson C."/>
            <person name="O'Brien R."/>
            <person name="Bibel M."/>
            <person name="Schiess R."/>
            <person name="Aebersold R."/>
            <person name="Watts J.D."/>
        </authorList>
    </citation>
    <scope>GLYCOSYLATION [LARGE SCALE ANALYSIS] AT ASN-145; ASN-313; ASN-317 AND ASN-538</scope>
</reference>
<reference key="15">
    <citation type="journal article" date="2010" name="Cell">
        <title>A tissue-specific atlas of mouse protein phosphorylation and expression.</title>
        <authorList>
            <person name="Huttlin E.L."/>
            <person name="Jedrychowski M.P."/>
            <person name="Elias J.E."/>
            <person name="Goswami T."/>
            <person name="Rad R."/>
            <person name="Beausoleil S.A."/>
            <person name="Villen J."/>
            <person name="Haas W."/>
            <person name="Sowa M.E."/>
            <person name="Gygi S.P."/>
        </authorList>
    </citation>
    <scope>IDENTIFICATION BY MASS SPECTROMETRY [LARGE SCALE ANALYSIS]</scope>
    <source>
        <tissue>Brain</tissue>
        <tissue>Kidney</tissue>
        <tissue>Lung</tissue>
        <tissue>Spleen</tissue>
    </source>
</reference>
<evidence type="ECO:0000250" key="1"/>
<evidence type="ECO:0000250" key="2">
    <source>
        <dbReference type="UniProtKB" id="Q12913"/>
    </source>
</evidence>
<evidence type="ECO:0000255" key="3"/>
<evidence type="ECO:0000255" key="4">
    <source>
        <dbReference type="PROSITE-ProRule" id="PRU00160"/>
    </source>
</evidence>
<evidence type="ECO:0000255" key="5">
    <source>
        <dbReference type="PROSITE-ProRule" id="PRU00316"/>
    </source>
</evidence>
<evidence type="ECO:0000255" key="6">
    <source>
        <dbReference type="PROSITE-ProRule" id="PRU10044"/>
    </source>
</evidence>
<evidence type="ECO:0000269" key="7">
    <source>
    </source>
</evidence>
<evidence type="ECO:0000269" key="8">
    <source>
    </source>
</evidence>
<evidence type="ECO:0000269" key="9">
    <source>
    </source>
</evidence>
<evidence type="ECO:0000269" key="10">
    <source>
    </source>
</evidence>
<evidence type="ECO:0000269" key="11">
    <source>
    </source>
</evidence>
<evidence type="ECO:0000269" key="12">
    <source>
    </source>
</evidence>
<evidence type="ECO:0000269" key="13">
    <source>
    </source>
</evidence>
<evidence type="ECO:0000269" key="14">
    <source>
    </source>
</evidence>
<evidence type="ECO:0000269" key="15">
    <source>
    </source>
</evidence>
<evidence type="ECO:0000269" key="16">
    <source>
    </source>
</evidence>
<evidence type="ECO:0000269" key="17">
    <source>
    </source>
</evidence>
<evidence type="ECO:0000305" key="18"/>